<reference key="1">
    <citation type="journal article" date="1997" name="Nature">
        <title>The nucleotide sequence of Saccharomyces cerevisiae chromosome XVI.</title>
        <authorList>
            <person name="Bussey H."/>
            <person name="Storms R.K."/>
            <person name="Ahmed A."/>
            <person name="Albermann K."/>
            <person name="Allen E."/>
            <person name="Ansorge W."/>
            <person name="Araujo R."/>
            <person name="Aparicio A."/>
            <person name="Barrell B.G."/>
            <person name="Badcock K."/>
            <person name="Benes V."/>
            <person name="Botstein D."/>
            <person name="Bowman S."/>
            <person name="Brueckner M."/>
            <person name="Carpenter J."/>
            <person name="Cherry J.M."/>
            <person name="Chung E."/>
            <person name="Churcher C.M."/>
            <person name="Coster F."/>
            <person name="Davis K."/>
            <person name="Davis R.W."/>
            <person name="Dietrich F.S."/>
            <person name="Delius H."/>
            <person name="DiPaolo T."/>
            <person name="Dubois E."/>
            <person name="Duesterhoeft A."/>
            <person name="Duncan M."/>
            <person name="Floeth M."/>
            <person name="Fortin N."/>
            <person name="Friesen J.D."/>
            <person name="Fritz C."/>
            <person name="Goffeau A."/>
            <person name="Hall J."/>
            <person name="Hebling U."/>
            <person name="Heumann K."/>
            <person name="Hilbert H."/>
            <person name="Hillier L.W."/>
            <person name="Hunicke-Smith S."/>
            <person name="Hyman R.W."/>
            <person name="Johnston M."/>
            <person name="Kalman S."/>
            <person name="Kleine K."/>
            <person name="Komp C."/>
            <person name="Kurdi O."/>
            <person name="Lashkari D."/>
            <person name="Lew H."/>
            <person name="Lin A."/>
            <person name="Lin D."/>
            <person name="Louis E.J."/>
            <person name="Marathe R."/>
            <person name="Messenguy F."/>
            <person name="Mewes H.-W."/>
            <person name="Mirtipati S."/>
            <person name="Moestl D."/>
            <person name="Mueller-Auer S."/>
            <person name="Namath A."/>
            <person name="Nentwich U."/>
            <person name="Oefner P."/>
            <person name="Pearson D."/>
            <person name="Petel F.X."/>
            <person name="Pohl T.M."/>
            <person name="Purnelle B."/>
            <person name="Rajandream M.A."/>
            <person name="Rechmann S."/>
            <person name="Rieger M."/>
            <person name="Riles L."/>
            <person name="Roberts D."/>
            <person name="Schaefer M."/>
            <person name="Scharfe M."/>
            <person name="Scherens B."/>
            <person name="Schramm S."/>
            <person name="Schroeder M."/>
            <person name="Sdicu A.-M."/>
            <person name="Tettelin H."/>
            <person name="Urrestarazu L.A."/>
            <person name="Ushinsky S."/>
            <person name="Vierendeels F."/>
            <person name="Vissers S."/>
            <person name="Voss H."/>
            <person name="Walsh S.V."/>
            <person name="Wambutt R."/>
            <person name="Wang Y."/>
            <person name="Wedler E."/>
            <person name="Wedler H."/>
            <person name="Winnett E."/>
            <person name="Zhong W.-W."/>
            <person name="Zollner A."/>
            <person name="Vo D.H."/>
            <person name="Hani J."/>
        </authorList>
    </citation>
    <scope>NUCLEOTIDE SEQUENCE [LARGE SCALE GENOMIC DNA]</scope>
    <source>
        <strain>ATCC 204508 / S288c</strain>
    </source>
</reference>
<reference key="2">
    <citation type="journal article" date="2014" name="G3 (Bethesda)">
        <title>The reference genome sequence of Saccharomyces cerevisiae: Then and now.</title>
        <authorList>
            <person name="Engel S.R."/>
            <person name="Dietrich F.S."/>
            <person name="Fisk D.G."/>
            <person name="Binkley G."/>
            <person name="Balakrishnan R."/>
            <person name="Costanzo M.C."/>
            <person name="Dwight S.S."/>
            <person name="Hitz B.C."/>
            <person name="Karra K."/>
            <person name="Nash R.S."/>
            <person name="Weng S."/>
            <person name="Wong E.D."/>
            <person name="Lloyd P."/>
            <person name="Skrzypek M.S."/>
            <person name="Miyasato S.R."/>
            <person name="Simison M."/>
            <person name="Cherry J.M."/>
        </authorList>
    </citation>
    <scope>GENOME REANNOTATION</scope>
    <source>
        <strain>ATCC 204508 / S288c</strain>
    </source>
</reference>
<reference key="3">
    <citation type="journal article" date="1998" name="Proc. Natl. Acad. Sci. U.S.A.">
        <title>Isolation of yeast mutants defective for localization of vacuolar vital dyes.</title>
        <authorList>
            <person name="Zheng B."/>
            <person name="Wu J.N."/>
            <person name="Schober W."/>
            <person name="Lewis D.E."/>
            <person name="Vida T."/>
        </authorList>
    </citation>
    <scope>FUNCTION</scope>
</reference>
<reference key="4">
    <citation type="journal article" date="2003" name="Nature">
        <title>Global analysis of protein localization in budding yeast.</title>
        <authorList>
            <person name="Huh W.-K."/>
            <person name="Falvo J.V."/>
            <person name="Gerke L.C."/>
            <person name="Carroll A.S."/>
            <person name="Howson R.W."/>
            <person name="Weissman J.S."/>
            <person name="O'Shea E.K."/>
        </authorList>
    </citation>
    <scope>SUBCELLULAR LOCATION [LARGE SCALE ANALYSIS]</scope>
</reference>
<reference key="5">
    <citation type="journal article" date="2003" name="Nature">
        <title>Global analysis of protein expression in yeast.</title>
        <authorList>
            <person name="Ghaemmaghami S."/>
            <person name="Huh W.-K."/>
            <person name="Bower K."/>
            <person name="Howson R.W."/>
            <person name="Belle A."/>
            <person name="Dephoure N."/>
            <person name="O'Shea E.K."/>
            <person name="Weissman J.S."/>
        </authorList>
    </citation>
    <scope>LEVEL OF PROTEIN EXPRESSION [LARGE SCALE ANALYSIS]</scope>
</reference>
<reference key="6">
    <citation type="journal article" date="2007" name="J. Proteome Res.">
        <title>Large-scale phosphorylation analysis of alpha-factor-arrested Saccharomyces cerevisiae.</title>
        <authorList>
            <person name="Li X."/>
            <person name="Gerber S.A."/>
            <person name="Rudner A.D."/>
            <person name="Beausoleil S.A."/>
            <person name="Haas W."/>
            <person name="Villen J."/>
            <person name="Elias J.E."/>
            <person name="Gygi S.P."/>
        </authorList>
    </citation>
    <scope>PHOSPHORYLATION [LARGE SCALE ANALYSIS] AT SER-471 AND SER-551</scope>
    <scope>IDENTIFICATION BY MASS SPECTROMETRY [LARGE SCALE ANALYSIS]</scope>
    <source>
        <strain>ADR376</strain>
    </source>
</reference>
<reference key="7">
    <citation type="journal article" date="2008" name="Mol. Cell. Proteomics">
        <title>A multidimensional chromatography technology for in-depth phosphoproteome analysis.</title>
        <authorList>
            <person name="Albuquerque C.P."/>
            <person name="Smolka M.B."/>
            <person name="Payne S.H."/>
            <person name="Bafna V."/>
            <person name="Eng J."/>
            <person name="Zhou H."/>
        </authorList>
    </citation>
    <scope>PHOSPHORYLATION [LARGE SCALE ANALYSIS] AT SER-551</scope>
    <scope>IDENTIFICATION BY MASS SPECTROMETRY [LARGE SCALE ANALYSIS]</scope>
</reference>
<reference key="8">
    <citation type="journal article" date="2009" name="Science">
        <title>Global analysis of Cdk1 substrate phosphorylation sites provides insights into evolution.</title>
        <authorList>
            <person name="Holt L.J."/>
            <person name="Tuch B.B."/>
            <person name="Villen J."/>
            <person name="Johnson A.D."/>
            <person name="Gygi S.P."/>
            <person name="Morgan D.O."/>
        </authorList>
    </citation>
    <scope>PHOSPHORYLATION [LARGE SCALE ANALYSIS] AT SER-471; THR-496; SER-551; SER-662; THR-739; THR-756 AND SER-757</scope>
    <scope>IDENTIFICATION BY MASS SPECTROMETRY [LARGE SCALE ANALYSIS]</scope>
</reference>
<comment type="function">
    <text evidence="5">May have a vacuolar function.</text>
</comment>
<comment type="subcellular location">
    <subcellularLocation>
        <location evidence="3">Cytoplasm</location>
    </subcellularLocation>
    <subcellularLocation>
        <location evidence="3">Bud</location>
    </subcellularLocation>
    <subcellularLocation>
        <location evidence="3">Bud neck</location>
    </subcellularLocation>
    <subcellularLocation>
        <location evidence="3">Cytoplasm</location>
        <location evidence="3">Cell cortex</location>
    </subcellularLocation>
    <text>And found in the cell periphery.</text>
</comment>
<comment type="miscellaneous">
    <text evidence="4">Present with 2180 molecules/cell in log phase SD medium.</text>
</comment>
<comment type="similarity">
    <text evidence="6">Belongs to the PAM1/SVL3 family.</text>
</comment>
<accession>Q03088</accession>
<accession>D6W3Y1</accession>
<dbReference type="EMBL" id="U44030">
    <property type="protein sequence ID" value="AAB68187.1"/>
    <property type="molecule type" value="Genomic_DNA"/>
</dbReference>
<dbReference type="EMBL" id="BK006949">
    <property type="protein sequence ID" value="DAA11397.1"/>
    <property type="molecule type" value="Genomic_DNA"/>
</dbReference>
<dbReference type="PIR" id="S62042">
    <property type="entry name" value="S62042"/>
</dbReference>
<dbReference type="RefSeq" id="NP_015293.1">
    <property type="nucleotide sequence ID" value="NM_001183846.1"/>
</dbReference>
<dbReference type="SMR" id="Q03088"/>
<dbReference type="BioGRID" id="36146">
    <property type="interactions" value="186"/>
</dbReference>
<dbReference type="DIP" id="DIP-2723N"/>
<dbReference type="FunCoup" id="Q03088">
    <property type="interactions" value="127"/>
</dbReference>
<dbReference type="IntAct" id="Q03088">
    <property type="interactions" value="31"/>
</dbReference>
<dbReference type="MINT" id="Q03088"/>
<dbReference type="STRING" id="4932.YPL032C"/>
<dbReference type="GlyGen" id="Q03088">
    <property type="glycosylation" value="3 sites, 1 O-linked glycan (2 sites)"/>
</dbReference>
<dbReference type="iPTMnet" id="Q03088"/>
<dbReference type="PaxDb" id="4932-YPL032C"/>
<dbReference type="PeptideAtlas" id="Q03088"/>
<dbReference type="EnsemblFungi" id="YPL032C_mRNA">
    <property type="protein sequence ID" value="YPL032C"/>
    <property type="gene ID" value="YPL032C"/>
</dbReference>
<dbReference type="GeneID" id="856075"/>
<dbReference type="KEGG" id="sce:YPL032C"/>
<dbReference type="AGR" id="SGD:S000005953"/>
<dbReference type="SGD" id="S000005953">
    <property type="gene designation" value="SVL3"/>
</dbReference>
<dbReference type="VEuPathDB" id="FungiDB:YPL032C"/>
<dbReference type="eggNOG" id="ENOG502QT3Z">
    <property type="taxonomic scope" value="Eukaryota"/>
</dbReference>
<dbReference type="GeneTree" id="ENSGT00940000176320"/>
<dbReference type="HOGENOM" id="CLU_010717_0_0_1"/>
<dbReference type="InParanoid" id="Q03088"/>
<dbReference type="OMA" id="IWVGATN"/>
<dbReference type="OrthoDB" id="5302359at2759"/>
<dbReference type="BioCyc" id="YEAST:G3O-33947-MONOMER"/>
<dbReference type="BioGRID-ORCS" id="856075">
    <property type="hits" value="0 hits in 10 CRISPR screens"/>
</dbReference>
<dbReference type="PRO" id="PR:Q03088"/>
<dbReference type="Proteomes" id="UP000002311">
    <property type="component" value="Chromosome XVI"/>
</dbReference>
<dbReference type="RNAct" id="Q03088">
    <property type="molecule type" value="protein"/>
</dbReference>
<dbReference type="GO" id="GO:0005938">
    <property type="term" value="C:cell cortex"/>
    <property type="evidence" value="ECO:0007669"/>
    <property type="project" value="UniProtKB-SubCell"/>
</dbReference>
<dbReference type="GO" id="GO:0071944">
    <property type="term" value="C:cell periphery"/>
    <property type="evidence" value="ECO:0007005"/>
    <property type="project" value="SGD"/>
</dbReference>
<dbReference type="GO" id="GO:0005933">
    <property type="term" value="C:cellular bud"/>
    <property type="evidence" value="ECO:0007005"/>
    <property type="project" value="SGD"/>
</dbReference>
<dbReference type="GO" id="GO:0005935">
    <property type="term" value="C:cellular bud neck"/>
    <property type="evidence" value="ECO:0000314"/>
    <property type="project" value="SGD"/>
</dbReference>
<dbReference type="GO" id="GO:0005934">
    <property type="term" value="C:cellular bud tip"/>
    <property type="evidence" value="ECO:0000314"/>
    <property type="project" value="SGD"/>
</dbReference>
<dbReference type="GO" id="GO:0005737">
    <property type="term" value="C:cytoplasm"/>
    <property type="evidence" value="ECO:0007005"/>
    <property type="project" value="SGD"/>
</dbReference>
<dbReference type="GO" id="GO:0006897">
    <property type="term" value="P:endocytosis"/>
    <property type="evidence" value="ECO:0000315"/>
    <property type="project" value="SGD"/>
</dbReference>
<dbReference type="FunFam" id="1.10.1040.10:FF:000033">
    <property type="entry name" value="PAM1p protein"/>
    <property type="match status" value="1"/>
</dbReference>
<dbReference type="Gene3D" id="1.10.1040.10">
    <property type="entry name" value="N-(1-d-carboxylethyl)-l-norvaline Dehydrogenase, domain 2"/>
    <property type="match status" value="1"/>
</dbReference>
<dbReference type="InterPro" id="IPR008927">
    <property type="entry name" value="6-PGluconate_DH-like_C_sf"/>
</dbReference>
<dbReference type="InterPro" id="IPR013328">
    <property type="entry name" value="6PGD_dom2"/>
</dbReference>
<dbReference type="InterPro" id="IPR013752">
    <property type="entry name" value="KPA_reductase"/>
</dbReference>
<dbReference type="InterPro" id="IPR051402">
    <property type="entry name" value="KPR-Related"/>
</dbReference>
<dbReference type="PANTHER" id="PTHR21708">
    <property type="entry name" value="PROBABLE 2-DEHYDROPANTOATE 2-REDUCTASE"/>
    <property type="match status" value="1"/>
</dbReference>
<dbReference type="PANTHER" id="PTHR21708:SF25">
    <property type="entry name" value="PROTEIN PAM1-RELATED"/>
    <property type="match status" value="1"/>
</dbReference>
<dbReference type="Pfam" id="PF08546">
    <property type="entry name" value="ApbA_C"/>
    <property type="match status" value="1"/>
</dbReference>
<dbReference type="SUPFAM" id="SSF48179">
    <property type="entry name" value="6-phosphogluconate dehydrogenase C-terminal domain-like"/>
    <property type="match status" value="1"/>
</dbReference>
<name>SVL3_YEAST</name>
<protein>
    <recommendedName>
        <fullName>Styryl dye vacuolar localization protein 3</fullName>
    </recommendedName>
</protein>
<proteinExistence type="evidence at protein level"/>
<keyword id="KW-0175">Coiled coil</keyword>
<keyword id="KW-0963">Cytoplasm</keyword>
<keyword id="KW-0597">Phosphoprotein</keyword>
<keyword id="KW-1185">Reference proteome</keyword>
<sequence>MSSSSLRVLAIGNNPNILFYTSRFQLAKNIDLYHVNDSKSCQFEIETEYYGKDRFELENHFTSIEHLTEALSSKSSEAVFDIIIMSAPSLQELSSLASKLTSIIDSNTKIFLESSGFIQLEPFVKLSMESPHVNVFSILTDLDIRQIGPNHFKHFPSTAKENTIYLGESKSSTEKYSSGVITLLTTFEKLFAKLFSNIKINLCNFSSIEFLSQQWKLAISRICFDPLLIMFEQENPSDLDQQIIAKPLISGLVTEIITVAKTMGARLNSSHDNENSLLSLWKNSYHSTNKPPALVYHFIHQTTPLNIDILLLQTILLADDFGIKTPYLEFLYSVLSQFERLNSGKSKWFIRSDEKTQILQSLQKSQKNESALQTQITSLQGQISKLRQELLMQAKQHEMETNELKEKHQVALKAQAQAQAQAQSQAQTSIEALTPTEATNQSDTNEYKATGTPNLRDIEDMALYSVNYGDSPVRSPPPVVSSQPQMNSPLSSHSQTFGENNGTNDKLLQERELQLRKKELELQERELEFQKRALQQQRFNNSNNSIPRKPSFPQLQQSANVRSNSRGMHGTNGAMSQPASAGNFVDPISSSIAAYDPQQPPSLPLQQPQQSVQVQPFHSHSIKPTSRKNRNSNMPNIGNPSSINMSDFGRPPNNSSQTRLNSMPTHSIVNQNRLRSQQSKNKLNMPHATNPNNTFNQVPAPSLNNHVPTQRQFSSSTMIEVTNNNNKVNNSSSNPDISTNSVVHNAMQFTNTNNNTSSTVDINDPKNIAPPPTTSVSAPSTPTLSSSSQMANMASPSTDNGDNEEKNGGKKKRFGLFKKKNKSKK</sequence>
<organism>
    <name type="scientific">Saccharomyces cerevisiae (strain ATCC 204508 / S288c)</name>
    <name type="common">Baker's yeast</name>
    <dbReference type="NCBI Taxonomy" id="559292"/>
    <lineage>
        <taxon>Eukaryota</taxon>
        <taxon>Fungi</taxon>
        <taxon>Dikarya</taxon>
        <taxon>Ascomycota</taxon>
        <taxon>Saccharomycotina</taxon>
        <taxon>Saccharomycetes</taxon>
        <taxon>Saccharomycetales</taxon>
        <taxon>Saccharomycetaceae</taxon>
        <taxon>Saccharomyces</taxon>
    </lineage>
</organism>
<evidence type="ECO:0000255" key="1"/>
<evidence type="ECO:0000256" key="2">
    <source>
        <dbReference type="SAM" id="MobiDB-lite"/>
    </source>
</evidence>
<evidence type="ECO:0000269" key="3">
    <source>
    </source>
</evidence>
<evidence type="ECO:0000269" key="4">
    <source>
    </source>
</evidence>
<evidence type="ECO:0000269" key="5">
    <source>
    </source>
</evidence>
<evidence type="ECO:0000305" key="6"/>
<evidence type="ECO:0007744" key="7">
    <source>
    </source>
</evidence>
<evidence type="ECO:0007744" key="8">
    <source>
    </source>
</evidence>
<evidence type="ECO:0007744" key="9">
    <source>
    </source>
</evidence>
<feature type="chain" id="PRO_0000072340" description="Styryl dye vacuolar localization protein 3">
    <location>
        <begin position="1"/>
        <end position="825"/>
    </location>
</feature>
<feature type="region of interest" description="Disordered" evidence="2">
    <location>
        <begin position="472"/>
        <end position="503"/>
    </location>
</feature>
<feature type="region of interest" description="Disordered" evidence="2">
    <location>
        <begin position="538"/>
        <end position="664"/>
    </location>
</feature>
<feature type="region of interest" description="Disordered" evidence="2">
    <location>
        <begin position="750"/>
        <end position="825"/>
    </location>
</feature>
<feature type="coiled-coil region" evidence="1">
    <location>
        <begin position="366"/>
        <end position="423"/>
    </location>
</feature>
<feature type="compositionally biased region" description="Low complexity" evidence="2">
    <location>
        <begin position="480"/>
        <end position="489"/>
    </location>
</feature>
<feature type="compositionally biased region" description="Polar residues" evidence="2">
    <location>
        <begin position="490"/>
        <end position="503"/>
    </location>
</feature>
<feature type="compositionally biased region" description="Polar residues" evidence="2">
    <location>
        <begin position="553"/>
        <end position="566"/>
    </location>
</feature>
<feature type="compositionally biased region" description="Low complexity" evidence="2">
    <location>
        <begin position="604"/>
        <end position="616"/>
    </location>
</feature>
<feature type="compositionally biased region" description="Polar residues" evidence="2">
    <location>
        <begin position="631"/>
        <end position="645"/>
    </location>
</feature>
<feature type="compositionally biased region" description="Polar residues" evidence="2">
    <location>
        <begin position="652"/>
        <end position="664"/>
    </location>
</feature>
<feature type="compositionally biased region" description="Low complexity" evidence="2">
    <location>
        <begin position="750"/>
        <end position="759"/>
    </location>
</feature>
<feature type="compositionally biased region" description="Low complexity" evidence="2">
    <location>
        <begin position="774"/>
        <end position="788"/>
    </location>
</feature>
<feature type="compositionally biased region" description="Polar residues" evidence="2">
    <location>
        <begin position="789"/>
        <end position="798"/>
    </location>
</feature>
<feature type="compositionally biased region" description="Basic residues" evidence="2">
    <location>
        <begin position="809"/>
        <end position="825"/>
    </location>
</feature>
<feature type="modified residue" description="Phosphoserine" evidence="7 9">
    <location>
        <position position="471"/>
    </location>
</feature>
<feature type="modified residue" description="Phosphothreonine" evidence="9">
    <location>
        <position position="496"/>
    </location>
</feature>
<feature type="modified residue" description="Phosphoserine" evidence="7 8 9">
    <location>
        <position position="551"/>
    </location>
</feature>
<feature type="modified residue" description="Phosphoserine" evidence="9">
    <location>
        <position position="662"/>
    </location>
</feature>
<feature type="modified residue" description="Phosphothreonine" evidence="9">
    <location>
        <position position="739"/>
    </location>
</feature>
<feature type="modified residue" description="Phosphothreonine" evidence="9">
    <location>
        <position position="756"/>
    </location>
</feature>
<feature type="modified residue" description="Phosphoserine" evidence="9">
    <location>
        <position position="757"/>
    </location>
</feature>
<gene>
    <name type="primary">SVL3</name>
    <name type="ordered locus">YPL032C</name>
    <name type="ORF">P7102.17</name>
</gene>